<reference key="1">
    <citation type="submission" date="2007-08" db="EMBL/GenBank/DDBJ databases">
        <authorList>
            <consortium name="The Vibrio harveyi Genome Sequencing Project"/>
            <person name="Bassler B."/>
            <person name="Clifton S.W."/>
            <person name="Fulton L."/>
            <person name="Delehaunty K."/>
            <person name="Fronick C."/>
            <person name="Harrison M."/>
            <person name="Markivic C."/>
            <person name="Fulton R."/>
            <person name="Tin-Wollam A.-M."/>
            <person name="Shah N."/>
            <person name="Pepin K."/>
            <person name="Nash W."/>
            <person name="Thiruvilangam P."/>
            <person name="Bhonagiri V."/>
            <person name="Waters C."/>
            <person name="Tu K.C."/>
            <person name="Irgon J."/>
            <person name="Wilson R.K."/>
        </authorList>
    </citation>
    <scope>NUCLEOTIDE SEQUENCE [LARGE SCALE GENOMIC DNA]</scope>
    <source>
        <strain>ATCC BAA-1116 / BB120</strain>
    </source>
</reference>
<name>EX7L_VIBC1</name>
<sequence length="443" mass="49854">MLSQTNQNIFTVSRLNAEVRLLLENEMGIVWLVGEISNFSAPVSGHWYLTLKDSRAQVKCAMFRGNNRRVTFKPANGNQVLVKARLSLYEPRGDYQLIIESMQPEGDGRLQQEFEALKMKLAAEGLFAQTNKQPLPEHPKRVGVITSKTGAALYDILDVLKRRDPSLPVVVYPTMVQGEEAAIQMAQAIGRANSRDECDVLIVGRGGGSLEDLWCFNNEILARTIAASQIPIISAVGHEVDVTIADFVADIRAPTPSAAAELVSRDNSHKDQALVTHQHKLASAMRYYLAQQKQQSAQLMHRLERQHPSYQLQRQTQQLDELEMRLQRAMQRFITTRQQAVERKHHRLQLNSPVKRLAEQKSKLDRVEQKLLDAMDRKLLTMRHQLAIAAEKLDTVSPLATLKRGYSITQTEQGQVVTQAKDVKTGDVLVTRLSDGELRSTVN</sequence>
<accession>A7MU31</accession>
<feature type="chain" id="PRO_1000048791" description="Exodeoxyribonuclease 7 large subunit">
    <location>
        <begin position="1"/>
        <end position="443"/>
    </location>
</feature>
<dbReference type="EC" id="3.1.11.6" evidence="1"/>
<dbReference type="EMBL" id="CP000789">
    <property type="protein sequence ID" value="ABU70068.1"/>
    <property type="molecule type" value="Genomic_DNA"/>
</dbReference>
<dbReference type="RefSeq" id="WP_012127095.1">
    <property type="nucleotide sequence ID" value="NC_009783.1"/>
</dbReference>
<dbReference type="SMR" id="A7MU31"/>
<dbReference type="KEGG" id="vha:VIBHAR_01075"/>
<dbReference type="PATRIC" id="fig|338187.25.peg.1552"/>
<dbReference type="Proteomes" id="UP000008152">
    <property type="component" value="Chromosome I"/>
</dbReference>
<dbReference type="GO" id="GO:0005737">
    <property type="term" value="C:cytoplasm"/>
    <property type="evidence" value="ECO:0007669"/>
    <property type="project" value="UniProtKB-SubCell"/>
</dbReference>
<dbReference type="GO" id="GO:0009318">
    <property type="term" value="C:exodeoxyribonuclease VII complex"/>
    <property type="evidence" value="ECO:0007669"/>
    <property type="project" value="InterPro"/>
</dbReference>
<dbReference type="GO" id="GO:0008855">
    <property type="term" value="F:exodeoxyribonuclease VII activity"/>
    <property type="evidence" value="ECO:0007669"/>
    <property type="project" value="UniProtKB-UniRule"/>
</dbReference>
<dbReference type="GO" id="GO:0003676">
    <property type="term" value="F:nucleic acid binding"/>
    <property type="evidence" value="ECO:0007669"/>
    <property type="project" value="InterPro"/>
</dbReference>
<dbReference type="GO" id="GO:0006308">
    <property type="term" value="P:DNA catabolic process"/>
    <property type="evidence" value="ECO:0007669"/>
    <property type="project" value="UniProtKB-UniRule"/>
</dbReference>
<dbReference type="CDD" id="cd04489">
    <property type="entry name" value="ExoVII_LU_OBF"/>
    <property type="match status" value="1"/>
</dbReference>
<dbReference type="HAMAP" id="MF_00378">
    <property type="entry name" value="Exonuc_7_L"/>
    <property type="match status" value="1"/>
</dbReference>
<dbReference type="InterPro" id="IPR003753">
    <property type="entry name" value="Exonuc_VII_L"/>
</dbReference>
<dbReference type="InterPro" id="IPR020579">
    <property type="entry name" value="Exonuc_VII_lsu_C"/>
</dbReference>
<dbReference type="InterPro" id="IPR025824">
    <property type="entry name" value="OB-fold_nuc-bd_dom"/>
</dbReference>
<dbReference type="NCBIfam" id="TIGR00237">
    <property type="entry name" value="xseA"/>
    <property type="match status" value="1"/>
</dbReference>
<dbReference type="PANTHER" id="PTHR30008">
    <property type="entry name" value="EXODEOXYRIBONUCLEASE 7 LARGE SUBUNIT"/>
    <property type="match status" value="1"/>
</dbReference>
<dbReference type="PANTHER" id="PTHR30008:SF0">
    <property type="entry name" value="EXODEOXYRIBONUCLEASE 7 LARGE SUBUNIT"/>
    <property type="match status" value="1"/>
</dbReference>
<dbReference type="Pfam" id="PF02601">
    <property type="entry name" value="Exonuc_VII_L"/>
    <property type="match status" value="1"/>
</dbReference>
<dbReference type="Pfam" id="PF13742">
    <property type="entry name" value="tRNA_anti_2"/>
    <property type="match status" value="1"/>
</dbReference>
<keyword id="KW-0963">Cytoplasm</keyword>
<keyword id="KW-0269">Exonuclease</keyword>
<keyword id="KW-0378">Hydrolase</keyword>
<keyword id="KW-0540">Nuclease</keyword>
<organism>
    <name type="scientific">Vibrio campbellii (strain ATCC BAA-1116)</name>
    <dbReference type="NCBI Taxonomy" id="2902295"/>
    <lineage>
        <taxon>Bacteria</taxon>
        <taxon>Pseudomonadati</taxon>
        <taxon>Pseudomonadota</taxon>
        <taxon>Gammaproteobacteria</taxon>
        <taxon>Vibrionales</taxon>
        <taxon>Vibrionaceae</taxon>
        <taxon>Vibrio</taxon>
    </lineage>
</organism>
<comment type="function">
    <text evidence="1">Bidirectionally degrades single-stranded DNA into large acid-insoluble oligonucleotides, which are then degraded further into small acid-soluble oligonucleotides.</text>
</comment>
<comment type="catalytic activity">
    <reaction evidence="1">
        <text>Exonucleolytic cleavage in either 5'- to 3'- or 3'- to 5'-direction to yield nucleoside 5'-phosphates.</text>
        <dbReference type="EC" id="3.1.11.6"/>
    </reaction>
</comment>
<comment type="subunit">
    <text evidence="1">Heterooligomer composed of large and small subunits.</text>
</comment>
<comment type="subcellular location">
    <subcellularLocation>
        <location evidence="1">Cytoplasm</location>
    </subcellularLocation>
</comment>
<comment type="similarity">
    <text evidence="1">Belongs to the XseA family.</text>
</comment>
<gene>
    <name evidence="1" type="primary">xseA</name>
    <name type="ordered locus">VIBHAR_01075</name>
</gene>
<evidence type="ECO:0000255" key="1">
    <source>
        <dbReference type="HAMAP-Rule" id="MF_00378"/>
    </source>
</evidence>
<proteinExistence type="inferred from homology"/>
<protein>
    <recommendedName>
        <fullName evidence="1">Exodeoxyribonuclease 7 large subunit</fullName>
        <ecNumber evidence="1">3.1.11.6</ecNumber>
    </recommendedName>
    <alternativeName>
        <fullName evidence="1">Exodeoxyribonuclease VII large subunit</fullName>
        <shortName evidence="1">Exonuclease VII large subunit</shortName>
    </alternativeName>
</protein>